<accession>Q2SKC5</accession>
<evidence type="ECO:0000255" key="1">
    <source>
        <dbReference type="HAMAP-Rule" id="MF_00015"/>
    </source>
</evidence>
<gene>
    <name evidence="1" type="primary">lexA</name>
    <name type="ordered locus">HCH_02068</name>
</gene>
<keyword id="KW-0068">Autocatalytic cleavage</keyword>
<keyword id="KW-0227">DNA damage</keyword>
<keyword id="KW-0234">DNA repair</keyword>
<keyword id="KW-0235">DNA replication</keyword>
<keyword id="KW-0238">DNA-binding</keyword>
<keyword id="KW-0378">Hydrolase</keyword>
<keyword id="KW-1185">Reference proteome</keyword>
<keyword id="KW-0678">Repressor</keyword>
<keyword id="KW-0742">SOS response</keyword>
<keyword id="KW-0804">Transcription</keyword>
<keyword id="KW-0805">Transcription regulation</keyword>
<organism>
    <name type="scientific">Hahella chejuensis (strain KCTC 2396)</name>
    <dbReference type="NCBI Taxonomy" id="349521"/>
    <lineage>
        <taxon>Bacteria</taxon>
        <taxon>Pseudomonadati</taxon>
        <taxon>Pseudomonadota</taxon>
        <taxon>Gammaproteobacteria</taxon>
        <taxon>Oceanospirillales</taxon>
        <taxon>Hahellaceae</taxon>
        <taxon>Hahella</taxon>
    </lineage>
</organism>
<reference key="1">
    <citation type="journal article" date="2005" name="Nucleic Acids Res.">
        <title>Genomic blueprint of Hahella chejuensis, a marine microbe producing an algicidal agent.</title>
        <authorList>
            <person name="Jeong H."/>
            <person name="Yim J.H."/>
            <person name="Lee C."/>
            <person name="Choi S.-H."/>
            <person name="Park Y.K."/>
            <person name="Yoon S.H."/>
            <person name="Hur C.-G."/>
            <person name="Kang H.-Y."/>
            <person name="Kim D."/>
            <person name="Lee H.H."/>
            <person name="Park K.H."/>
            <person name="Park S.-H."/>
            <person name="Park H.-S."/>
            <person name="Lee H.K."/>
            <person name="Oh T.K."/>
            <person name="Kim J.F."/>
        </authorList>
    </citation>
    <scope>NUCLEOTIDE SEQUENCE [LARGE SCALE GENOMIC DNA]</scope>
    <source>
        <strain>KCTC 2396</strain>
    </source>
</reference>
<feature type="chain" id="PRO_1000001292" description="LexA repressor">
    <location>
        <begin position="1"/>
        <end position="200"/>
    </location>
</feature>
<feature type="DNA-binding region" description="H-T-H motif" evidence="1">
    <location>
        <begin position="28"/>
        <end position="48"/>
    </location>
</feature>
<feature type="active site" description="For autocatalytic cleavage activity" evidence="1">
    <location>
        <position position="121"/>
    </location>
</feature>
<feature type="active site" description="For autocatalytic cleavage activity" evidence="1">
    <location>
        <position position="158"/>
    </location>
</feature>
<feature type="site" description="Cleavage; by autolysis" evidence="1">
    <location>
        <begin position="86"/>
        <end position="87"/>
    </location>
</feature>
<name>LEXA_HAHCH</name>
<sequence length="200" mass="22248">MIKLTKRQEQVLQLIREHIEETGYPPTRAEISNRLGFRSANAAEEHLKALAKKGAIEMVPGASRGIRLPASETQNQGIPIVGQVAAGYPILAQENIEEYCELPPSFFTPSADYFLRVKGMSMKDVGILDGDLLAVHRTTDIHNGQIVVARIGDEVTVKRFQRQKNKVLLLPENEEFEPIEVNLSQQPLDIEGLGVGVIRR</sequence>
<proteinExistence type="inferred from homology"/>
<comment type="function">
    <text evidence="1">Represses a number of genes involved in the response to DNA damage (SOS response), including recA and lexA. In the presence of single-stranded DNA, RecA interacts with LexA causing an autocatalytic cleavage which disrupts the DNA-binding part of LexA, leading to derepression of the SOS regulon and eventually DNA repair.</text>
</comment>
<comment type="catalytic activity">
    <reaction evidence="1">
        <text>Hydrolysis of Ala-|-Gly bond in repressor LexA.</text>
        <dbReference type="EC" id="3.4.21.88"/>
    </reaction>
</comment>
<comment type="subunit">
    <text evidence="1">Homodimer.</text>
</comment>
<comment type="similarity">
    <text evidence="1">Belongs to the peptidase S24 family.</text>
</comment>
<dbReference type="EC" id="3.4.21.88" evidence="1"/>
<dbReference type="EMBL" id="CP000155">
    <property type="protein sequence ID" value="ABC28899.1"/>
    <property type="molecule type" value="Genomic_DNA"/>
</dbReference>
<dbReference type="RefSeq" id="WP_011395970.1">
    <property type="nucleotide sequence ID" value="NC_007645.1"/>
</dbReference>
<dbReference type="SMR" id="Q2SKC5"/>
<dbReference type="STRING" id="349521.HCH_02068"/>
<dbReference type="MEROPS" id="S24.001"/>
<dbReference type="KEGG" id="hch:HCH_02068"/>
<dbReference type="eggNOG" id="COG1974">
    <property type="taxonomic scope" value="Bacteria"/>
</dbReference>
<dbReference type="HOGENOM" id="CLU_066192_45_3_6"/>
<dbReference type="Proteomes" id="UP000000238">
    <property type="component" value="Chromosome"/>
</dbReference>
<dbReference type="GO" id="GO:0003677">
    <property type="term" value="F:DNA binding"/>
    <property type="evidence" value="ECO:0007669"/>
    <property type="project" value="UniProtKB-UniRule"/>
</dbReference>
<dbReference type="GO" id="GO:0004252">
    <property type="term" value="F:serine-type endopeptidase activity"/>
    <property type="evidence" value="ECO:0007669"/>
    <property type="project" value="UniProtKB-UniRule"/>
</dbReference>
<dbReference type="GO" id="GO:0006281">
    <property type="term" value="P:DNA repair"/>
    <property type="evidence" value="ECO:0007669"/>
    <property type="project" value="UniProtKB-UniRule"/>
</dbReference>
<dbReference type="GO" id="GO:0006260">
    <property type="term" value="P:DNA replication"/>
    <property type="evidence" value="ECO:0007669"/>
    <property type="project" value="UniProtKB-UniRule"/>
</dbReference>
<dbReference type="GO" id="GO:0045892">
    <property type="term" value="P:negative regulation of DNA-templated transcription"/>
    <property type="evidence" value="ECO:0007669"/>
    <property type="project" value="UniProtKB-UniRule"/>
</dbReference>
<dbReference type="GO" id="GO:0006508">
    <property type="term" value="P:proteolysis"/>
    <property type="evidence" value="ECO:0007669"/>
    <property type="project" value="InterPro"/>
</dbReference>
<dbReference type="GO" id="GO:0009432">
    <property type="term" value="P:SOS response"/>
    <property type="evidence" value="ECO:0007669"/>
    <property type="project" value="UniProtKB-UniRule"/>
</dbReference>
<dbReference type="CDD" id="cd06529">
    <property type="entry name" value="S24_LexA-like"/>
    <property type="match status" value="1"/>
</dbReference>
<dbReference type="FunFam" id="1.10.10.10:FF:000009">
    <property type="entry name" value="LexA repressor"/>
    <property type="match status" value="1"/>
</dbReference>
<dbReference type="FunFam" id="2.10.109.10:FF:000001">
    <property type="entry name" value="LexA repressor"/>
    <property type="match status" value="1"/>
</dbReference>
<dbReference type="Gene3D" id="2.10.109.10">
    <property type="entry name" value="Umud Fragment, subunit A"/>
    <property type="match status" value="1"/>
</dbReference>
<dbReference type="Gene3D" id="1.10.10.10">
    <property type="entry name" value="Winged helix-like DNA-binding domain superfamily/Winged helix DNA-binding domain"/>
    <property type="match status" value="1"/>
</dbReference>
<dbReference type="HAMAP" id="MF_00015">
    <property type="entry name" value="LexA"/>
    <property type="match status" value="1"/>
</dbReference>
<dbReference type="InterPro" id="IPR006200">
    <property type="entry name" value="LexA"/>
</dbReference>
<dbReference type="InterPro" id="IPR039418">
    <property type="entry name" value="LexA-like"/>
</dbReference>
<dbReference type="InterPro" id="IPR036286">
    <property type="entry name" value="LexA/Signal_pep-like_sf"/>
</dbReference>
<dbReference type="InterPro" id="IPR006199">
    <property type="entry name" value="LexA_DNA-bd_dom"/>
</dbReference>
<dbReference type="InterPro" id="IPR050077">
    <property type="entry name" value="LexA_repressor"/>
</dbReference>
<dbReference type="InterPro" id="IPR006197">
    <property type="entry name" value="Peptidase_S24_LexA"/>
</dbReference>
<dbReference type="InterPro" id="IPR015927">
    <property type="entry name" value="Peptidase_S24_S26A/B/C"/>
</dbReference>
<dbReference type="InterPro" id="IPR036388">
    <property type="entry name" value="WH-like_DNA-bd_sf"/>
</dbReference>
<dbReference type="InterPro" id="IPR036390">
    <property type="entry name" value="WH_DNA-bd_sf"/>
</dbReference>
<dbReference type="NCBIfam" id="TIGR00498">
    <property type="entry name" value="lexA"/>
    <property type="match status" value="1"/>
</dbReference>
<dbReference type="PANTHER" id="PTHR33516">
    <property type="entry name" value="LEXA REPRESSOR"/>
    <property type="match status" value="1"/>
</dbReference>
<dbReference type="PANTHER" id="PTHR33516:SF2">
    <property type="entry name" value="LEXA REPRESSOR-RELATED"/>
    <property type="match status" value="1"/>
</dbReference>
<dbReference type="Pfam" id="PF01726">
    <property type="entry name" value="LexA_DNA_bind"/>
    <property type="match status" value="1"/>
</dbReference>
<dbReference type="Pfam" id="PF00717">
    <property type="entry name" value="Peptidase_S24"/>
    <property type="match status" value="1"/>
</dbReference>
<dbReference type="PRINTS" id="PR00726">
    <property type="entry name" value="LEXASERPTASE"/>
</dbReference>
<dbReference type="SUPFAM" id="SSF51306">
    <property type="entry name" value="LexA/Signal peptidase"/>
    <property type="match status" value="1"/>
</dbReference>
<dbReference type="SUPFAM" id="SSF46785">
    <property type="entry name" value="Winged helix' DNA-binding domain"/>
    <property type="match status" value="1"/>
</dbReference>
<protein>
    <recommendedName>
        <fullName evidence="1">LexA repressor</fullName>
        <ecNumber evidence="1">3.4.21.88</ecNumber>
    </recommendedName>
</protein>